<name>HRCA_TETHA</name>
<accession>Q93R29</accession>
<sequence length="345" mass="39039">MLTQRQDNILHQIIHNYTNLGKPIGSKTLMEEGIAASSATIRNEMKTLEEYGLLVKPHSSSGRIPSLKGYRYYVDYLLEPEKLKKSEVDVMQQSLGKDFHEINDIIEQSAKILSKLTSYTALSIGPDVSNRKLTGFKMVPLNNRQVIAIIVTDKGNVENQVFSIPKSVDSEDLEKMVRIINDKLIGEPLLIVYQRLGTEIPMILHKYFQTTEGILDLFNNMLSEAFEEKIFVGGQMNLLNSDQIQNIDQFKSMLFMENSKQLNELLSTKDQPIQIRIGSELGNDLLSDMSLIQANYEIKDHGNGTIALLGSASMPYSKMLSLLDVFRQELAETLDDYYRSIDSFG</sequence>
<evidence type="ECO:0000255" key="1">
    <source>
        <dbReference type="HAMAP-Rule" id="MF_00081"/>
    </source>
</evidence>
<reference key="1">
    <citation type="submission" date="2001-08" db="EMBL/GenBank/DDBJ databases">
        <title>Characterization and expression analysis of dnaK operon of halophilic lactic acid bacterium Tetragenococcus halophila.</title>
        <authorList>
            <person name="Fukuda D."/>
            <person name="Watanabe M."/>
            <person name="Sonezaki S."/>
            <person name="Sugimoto S."/>
            <person name="Sonomoto K."/>
            <person name="Ishizaki A."/>
        </authorList>
    </citation>
    <scope>NUCLEOTIDE SEQUENCE [GENOMIC DNA]</scope>
</reference>
<dbReference type="EMBL" id="AB070346">
    <property type="protein sequence ID" value="BAB63288.1"/>
    <property type="molecule type" value="Genomic_DNA"/>
</dbReference>
<dbReference type="SMR" id="Q93R29"/>
<dbReference type="GO" id="GO:0003677">
    <property type="term" value="F:DNA binding"/>
    <property type="evidence" value="ECO:0007669"/>
    <property type="project" value="InterPro"/>
</dbReference>
<dbReference type="GO" id="GO:0045892">
    <property type="term" value="P:negative regulation of DNA-templated transcription"/>
    <property type="evidence" value="ECO:0007669"/>
    <property type="project" value="UniProtKB-UniRule"/>
</dbReference>
<dbReference type="Gene3D" id="3.30.450.40">
    <property type="match status" value="1"/>
</dbReference>
<dbReference type="Gene3D" id="3.30.390.60">
    <property type="entry name" value="Heat-inducible transcription repressor hrca homolog, domain 3"/>
    <property type="match status" value="1"/>
</dbReference>
<dbReference type="Gene3D" id="1.10.10.10">
    <property type="entry name" value="Winged helix-like DNA-binding domain superfamily/Winged helix DNA-binding domain"/>
    <property type="match status" value="1"/>
</dbReference>
<dbReference type="HAMAP" id="MF_00081">
    <property type="entry name" value="HrcA"/>
    <property type="match status" value="1"/>
</dbReference>
<dbReference type="InterPro" id="IPR029016">
    <property type="entry name" value="GAF-like_dom_sf"/>
</dbReference>
<dbReference type="InterPro" id="IPR002571">
    <property type="entry name" value="HrcA"/>
</dbReference>
<dbReference type="InterPro" id="IPR021153">
    <property type="entry name" value="HrcA_C"/>
</dbReference>
<dbReference type="InterPro" id="IPR036388">
    <property type="entry name" value="WH-like_DNA-bd_sf"/>
</dbReference>
<dbReference type="InterPro" id="IPR036390">
    <property type="entry name" value="WH_DNA-bd_sf"/>
</dbReference>
<dbReference type="InterPro" id="IPR005104">
    <property type="entry name" value="WHTH_HrcA_DNA-bd"/>
</dbReference>
<dbReference type="InterPro" id="IPR023120">
    <property type="entry name" value="WHTH_transcript_rep_HrcA_IDD"/>
</dbReference>
<dbReference type="NCBIfam" id="TIGR00331">
    <property type="entry name" value="hrcA"/>
    <property type="match status" value="1"/>
</dbReference>
<dbReference type="PANTHER" id="PTHR34824">
    <property type="entry name" value="HEAT-INDUCIBLE TRANSCRIPTION REPRESSOR HRCA"/>
    <property type="match status" value="1"/>
</dbReference>
<dbReference type="PANTHER" id="PTHR34824:SF1">
    <property type="entry name" value="HEAT-INDUCIBLE TRANSCRIPTION REPRESSOR HRCA"/>
    <property type="match status" value="1"/>
</dbReference>
<dbReference type="Pfam" id="PF01628">
    <property type="entry name" value="HrcA"/>
    <property type="match status" value="1"/>
</dbReference>
<dbReference type="Pfam" id="PF03444">
    <property type="entry name" value="HrcA_DNA-bdg"/>
    <property type="match status" value="1"/>
</dbReference>
<dbReference type="PIRSF" id="PIRSF005485">
    <property type="entry name" value="HrcA"/>
    <property type="match status" value="1"/>
</dbReference>
<dbReference type="SUPFAM" id="SSF55781">
    <property type="entry name" value="GAF domain-like"/>
    <property type="match status" value="1"/>
</dbReference>
<dbReference type="SUPFAM" id="SSF46785">
    <property type="entry name" value="Winged helix' DNA-binding domain"/>
    <property type="match status" value="1"/>
</dbReference>
<keyword id="KW-0678">Repressor</keyword>
<keyword id="KW-0346">Stress response</keyword>
<keyword id="KW-0804">Transcription</keyword>
<keyword id="KW-0805">Transcription regulation</keyword>
<proteinExistence type="inferred from homology"/>
<comment type="function">
    <text evidence="1">Negative regulator of class I heat shock genes (grpE-dnaK-dnaJ and groELS operons). Prevents heat-shock induction of these operons.</text>
</comment>
<comment type="similarity">
    <text evidence="1">Belongs to the HrcA family.</text>
</comment>
<organism>
    <name type="scientific">Tetragenococcus halophilus</name>
    <name type="common">Pediococcus halophilus</name>
    <dbReference type="NCBI Taxonomy" id="51669"/>
    <lineage>
        <taxon>Bacteria</taxon>
        <taxon>Bacillati</taxon>
        <taxon>Bacillota</taxon>
        <taxon>Bacilli</taxon>
        <taxon>Lactobacillales</taxon>
        <taxon>Enterococcaceae</taxon>
        <taxon>Tetragenococcus</taxon>
    </lineage>
</organism>
<feature type="chain" id="PRO_0000182551" description="Heat-inducible transcription repressor HrcA">
    <location>
        <begin position="1"/>
        <end position="345"/>
    </location>
</feature>
<gene>
    <name evidence="1" type="primary">hrcA</name>
</gene>
<protein>
    <recommendedName>
        <fullName evidence="1">Heat-inducible transcription repressor HrcA</fullName>
    </recommendedName>
</protein>